<reference key="1">
    <citation type="journal article" date="1999" name="Somat. Cell Mol. Genet.">
        <title>The mouse alanine:glyoxylate aminotransferase gene (Agxt1): cloning, expression, and mapping to chromosome 1.</title>
        <authorList>
            <person name="Li X.M."/>
            <person name="Salido E.C."/>
            <person name="Shapiro L.J."/>
        </authorList>
    </citation>
    <scope>NUCLEOTIDE SEQUENCE [MRNA] (ISOFORMS MITOCHONDRIAL AND PEROXISOMAL)</scope>
</reference>
<reference key="2">
    <citation type="journal article" date="2009" name="PLoS Biol.">
        <title>Lineage-specific biology revealed by a finished genome assembly of the mouse.</title>
        <authorList>
            <person name="Church D.M."/>
            <person name="Goodstadt L."/>
            <person name="Hillier L.W."/>
            <person name="Zody M.C."/>
            <person name="Goldstein S."/>
            <person name="She X."/>
            <person name="Bult C.J."/>
            <person name="Agarwala R."/>
            <person name="Cherry J.L."/>
            <person name="DiCuccio M."/>
            <person name="Hlavina W."/>
            <person name="Kapustin Y."/>
            <person name="Meric P."/>
            <person name="Maglott D."/>
            <person name="Birtle Z."/>
            <person name="Marques A.C."/>
            <person name="Graves T."/>
            <person name="Zhou S."/>
            <person name="Teague B."/>
            <person name="Potamousis K."/>
            <person name="Churas C."/>
            <person name="Place M."/>
            <person name="Herschleb J."/>
            <person name="Runnheim R."/>
            <person name="Forrest D."/>
            <person name="Amos-Landgraf J."/>
            <person name="Schwartz D.C."/>
            <person name="Cheng Z."/>
            <person name="Lindblad-Toh K."/>
            <person name="Eichler E.E."/>
            <person name="Ponting C.P."/>
        </authorList>
    </citation>
    <scope>NUCLEOTIDE SEQUENCE [LARGE SCALE GENOMIC DNA]</scope>
    <source>
        <strain>C57BL/6J</strain>
    </source>
</reference>
<reference key="3">
    <citation type="submission" date="2005-09" db="EMBL/GenBank/DDBJ databases">
        <authorList>
            <person name="Mural R.J."/>
            <person name="Adams M.D."/>
            <person name="Myers E.W."/>
            <person name="Smith H.O."/>
            <person name="Venter J.C."/>
        </authorList>
    </citation>
    <scope>NUCLEOTIDE SEQUENCE [LARGE SCALE GENOMIC DNA]</scope>
</reference>
<reference key="4">
    <citation type="journal article" date="2004" name="Genome Res.">
        <title>The status, quality, and expansion of the NIH full-length cDNA project: the Mammalian Gene Collection (MGC).</title>
        <authorList>
            <consortium name="The MGC Project Team"/>
        </authorList>
    </citation>
    <scope>NUCLEOTIDE SEQUENCE [LARGE SCALE MRNA] (ISOFORM MITOCHONDRIAL)</scope>
    <source>
        <strain>FVB/N</strain>
        <tissue>Liver</tissue>
    </source>
</reference>
<reference key="5">
    <citation type="journal article" date="2010" name="Cell">
        <title>A tissue-specific atlas of mouse protein phosphorylation and expression.</title>
        <authorList>
            <person name="Huttlin E.L."/>
            <person name="Jedrychowski M.P."/>
            <person name="Elias J.E."/>
            <person name="Goswami T."/>
            <person name="Rad R."/>
            <person name="Beausoleil S.A."/>
            <person name="Villen J."/>
            <person name="Haas W."/>
            <person name="Sowa M.E."/>
            <person name="Gygi S.P."/>
        </authorList>
    </citation>
    <scope>IDENTIFICATION BY MASS SPECTROMETRY [LARGE SCALE ANALYSIS]</scope>
    <source>
        <tissue>Liver</tissue>
    </source>
</reference>
<reference key="6">
    <citation type="journal article" date="2013" name="Mol. Cell">
        <title>SIRT5-mediated lysine desuccinylation impacts diverse metabolic pathways.</title>
        <authorList>
            <person name="Park J."/>
            <person name="Chen Y."/>
            <person name="Tishkoff D.X."/>
            <person name="Peng C."/>
            <person name="Tan M."/>
            <person name="Dai L."/>
            <person name="Xie Z."/>
            <person name="Zhang Y."/>
            <person name="Zwaans B.M."/>
            <person name="Skinner M.E."/>
            <person name="Lombard D.B."/>
            <person name="Zhao Y."/>
        </authorList>
    </citation>
    <scope>SUCCINYLATION [LARGE SCALE ANALYSIS] AT LYS-247 AND LYS-330</scope>
    <scope>IDENTIFICATION BY MASS SPECTROMETRY [LARGE SCALE ANALYSIS]</scope>
    <source>
        <tissue>Liver</tissue>
    </source>
</reference>
<reference key="7">
    <citation type="journal article" date="2013" name="Proc. Natl. Acad. Sci. U.S.A.">
        <title>Label-free quantitative proteomics of the lysine acetylome in mitochondria identifies substrates of SIRT3 in metabolic pathways.</title>
        <authorList>
            <person name="Rardin M.J."/>
            <person name="Newman J.C."/>
            <person name="Held J.M."/>
            <person name="Cusack M.P."/>
            <person name="Sorensen D.J."/>
            <person name="Li B."/>
            <person name="Schilling B."/>
            <person name="Mooney S.D."/>
            <person name="Kahn C.R."/>
            <person name="Verdin E."/>
            <person name="Gibson B.W."/>
        </authorList>
    </citation>
    <scope>ACETYLATION [LARGE SCALE ANALYSIS] AT LYS-247; LYS-256; LYS-330 AND LYS-334</scope>
    <scope>IDENTIFICATION BY MASS SPECTROMETRY [LARGE SCALE ANALYSIS]</scope>
    <source>
        <tissue>Liver</tissue>
    </source>
</reference>
<reference key="8">
    <citation type="submission" date="2009-10" db="PDB data bank">
        <title>Crystal structure of putative aminotransferase (AAH25799.1) from Mus musculus at 1.65 A resolution.</title>
        <authorList>
            <consortium name="Joint center for structural genomics (JCSG)"/>
        </authorList>
    </citation>
    <scope>X-RAY CRYSTALLOGRAPHY (1.65 ANGSTROMS) OF 23-414</scope>
</reference>
<comment type="function">
    <molecule>Isoform Peroxisomal</molecule>
    <text evidence="3">Catalyzes the transamination of glyoxylate to glycine and contributes to the glyoxylate detoxification.</text>
</comment>
<comment type="function">
    <molecule>Isoform Mitochondrial</molecule>
    <text evidence="2">Catalyzes the transamination between L-serine and pyruvate and weakly contributes to gluconeogenesis from the L-serine metabolism.</text>
</comment>
<comment type="catalytic activity">
    <molecule>Isoform Mitochondrial</molecule>
    <reaction evidence="2">
        <text>L-serine + pyruvate = 3-hydroxypyruvate + L-alanine</text>
        <dbReference type="Rhea" id="RHEA:22852"/>
        <dbReference type="ChEBI" id="CHEBI:15361"/>
        <dbReference type="ChEBI" id="CHEBI:17180"/>
        <dbReference type="ChEBI" id="CHEBI:33384"/>
        <dbReference type="ChEBI" id="CHEBI:57972"/>
        <dbReference type="EC" id="2.6.1.51"/>
    </reaction>
    <physiologicalReaction direction="left-to-right" evidence="2">
        <dbReference type="Rhea" id="RHEA:22853"/>
    </physiologicalReaction>
</comment>
<comment type="catalytic activity">
    <molecule>Isoform Peroxisomal</molecule>
    <reaction evidence="3">
        <text>glyoxylate + L-alanine = glycine + pyruvate</text>
        <dbReference type="Rhea" id="RHEA:24248"/>
        <dbReference type="ChEBI" id="CHEBI:15361"/>
        <dbReference type="ChEBI" id="CHEBI:36655"/>
        <dbReference type="ChEBI" id="CHEBI:57305"/>
        <dbReference type="ChEBI" id="CHEBI:57972"/>
        <dbReference type="EC" id="2.6.1.44"/>
    </reaction>
    <physiologicalReaction direction="left-to-right" evidence="3">
        <dbReference type="Rhea" id="RHEA:24249"/>
    </physiologicalReaction>
</comment>
<comment type="cofactor">
    <cofactor evidence="3">
        <name>pyridoxal 5'-phosphate</name>
        <dbReference type="ChEBI" id="CHEBI:597326"/>
    </cofactor>
</comment>
<comment type="subunit">
    <text evidence="3">Homodimer.</text>
</comment>
<comment type="subcellular location">
    <molecule>Isoform Peroxisomal</molecule>
    <subcellularLocation>
        <location evidence="3">Peroxisome</location>
    </subcellularLocation>
</comment>
<comment type="subcellular location">
    <molecule>Isoform Mitochondrial</molecule>
    <subcellularLocation>
        <location evidence="2">Mitochondrion matrix</location>
    </subcellularLocation>
</comment>
<comment type="alternative products">
    <event type="alternative initiation"/>
    <isoform>
        <id>O35423-1</id>
        <name evidence="4">Mitochondrial</name>
        <sequence type="displayed"/>
    </isoform>
    <isoform>
        <id>O35423-2</id>
        <name evidence="4">Peroxisomal</name>
        <sequence type="described" ref="VSP_018644"/>
    </isoform>
</comment>
<comment type="similarity">
    <text evidence="5">Belongs to the class-V pyridoxal-phosphate-dependent aminotransferase family.</text>
</comment>
<comment type="caution">
    <text evidence="5">The intracellular compartmentalization of AGTX in mammalian hepatocytes is species dependent. In human and rabbit, AGTX is peroxisomal. In new world monkeys (marmoset) and rodents (rat and mouse), it is distributed approximately evenly between peroxisomes and mitochondria. In carnivores, like cat, the great majority of the enzyme is mitochondrial with only a small proportion being peroxisomal.</text>
</comment>
<evidence type="ECO:0000250" key="1"/>
<evidence type="ECO:0000250" key="2">
    <source>
        <dbReference type="UniProtKB" id="P09139"/>
    </source>
</evidence>
<evidence type="ECO:0000250" key="3">
    <source>
        <dbReference type="UniProtKB" id="P21549"/>
    </source>
</evidence>
<evidence type="ECO:0000303" key="4">
    <source>
    </source>
</evidence>
<evidence type="ECO:0000305" key="5"/>
<evidence type="ECO:0000312" key="6">
    <source>
        <dbReference type="MGI" id="MGI:1329033"/>
    </source>
</evidence>
<evidence type="ECO:0007744" key="7">
    <source>
    </source>
</evidence>
<evidence type="ECO:0007744" key="8">
    <source>
    </source>
</evidence>
<evidence type="ECO:0007829" key="9">
    <source>
        <dbReference type="PDB" id="3KGW"/>
    </source>
</evidence>
<dbReference type="EC" id="2.6.1.44" evidence="3"/>
<dbReference type="EC" id="2.6.1.51" evidence="2"/>
<dbReference type="EMBL" id="AF027730">
    <property type="protein sequence ID" value="AAB82001.2"/>
    <property type="molecule type" value="mRNA"/>
</dbReference>
<dbReference type="EMBL" id="AC110247">
    <property type="status" value="NOT_ANNOTATED_CDS"/>
    <property type="molecule type" value="Genomic_DNA"/>
</dbReference>
<dbReference type="EMBL" id="CH466520">
    <property type="protein sequence ID" value="EDL39972.1"/>
    <property type="molecule type" value="Genomic_DNA"/>
</dbReference>
<dbReference type="EMBL" id="BC025799">
    <property type="protein sequence ID" value="AAH25799.1"/>
    <property type="molecule type" value="mRNA"/>
</dbReference>
<dbReference type="CCDS" id="CCDS15184.1">
    <molecule id="O35423-1"/>
</dbReference>
<dbReference type="RefSeq" id="NP_001263639.1">
    <molecule id="O35423-2"/>
    <property type="nucleotide sequence ID" value="NM_001276710.1"/>
</dbReference>
<dbReference type="RefSeq" id="NP_057911.2">
    <molecule id="O35423-1"/>
    <property type="nucleotide sequence ID" value="NM_016702.3"/>
</dbReference>
<dbReference type="PDB" id="3KGW">
    <property type="method" value="X-ray"/>
    <property type="resolution" value="1.65 A"/>
    <property type="chains" value="A/B=23-414"/>
</dbReference>
<dbReference type="PDB" id="3KGX">
    <property type="method" value="X-ray"/>
    <property type="resolution" value="1.80 A"/>
    <property type="chains" value="A/B=23-414"/>
</dbReference>
<dbReference type="PDBsum" id="3KGW"/>
<dbReference type="PDBsum" id="3KGX"/>
<dbReference type="SMR" id="O35423"/>
<dbReference type="FunCoup" id="O35423">
    <property type="interactions" value="1013"/>
</dbReference>
<dbReference type="STRING" id="10090.ENSMUSP00000027491"/>
<dbReference type="GlyGen" id="O35423">
    <property type="glycosylation" value="1 site, 1 O-linked glycan (1 site)"/>
</dbReference>
<dbReference type="iPTMnet" id="O35423"/>
<dbReference type="PhosphoSitePlus" id="O35423"/>
<dbReference type="SwissPalm" id="O35423"/>
<dbReference type="jPOST" id="O35423"/>
<dbReference type="PaxDb" id="10090-ENSMUSP00000027491"/>
<dbReference type="PeptideAtlas" id="O35423"/>
<dbReference type="ProteomicsDB" id="261647">
    <molecule id="O35423-1"/>
</dbReference>
<dbReference type="ProteomicsDB" id="261648">
    <molecule id="O35423-2"/>
</dbReference>
<dbReference type="Antibodypedia" id="34535">
    <property type="antibodies" value="308 antibodies from 30 providers"/>
</dbReference>
<dbReference type="DNASU" id="11611"/>
<dbReference type="Ensembl" id="ENSMUST00000027491.7">
    <molecule id="O35423-1"/>
    <property type="protein sequence ID" value="ENSMUSP00000027491.6"/>
    <property type="gene ID" value="ENSMUSG00000026272.7"/>
</dbReference>
<dbReference type="GeneID" id="11611"/>
<dbReference type="KEGG" id="mmu:11611"/>
<dbReference type="UCSC" id="uc007cdi.2">
    <molecule id="O35423-1"/>
    <property type="organism name" value="mouse"/>
</dbReference>
<dbReference type="AGR" id="MGI:1329033"/>
<dbReference type="CTD" id="189"/>
<dbReference type="MGI" id="MGI:1329033">
    <property type="gene designation" value="Agxt"/>
</dbReference>
<dbReference type="VEuPathDB" id="HostDB:ENSMUSG00000026272"/>
<dbReference type="eggNOG" id="KOG2862">
    <property type="taxonomic scope" value="Eukaryota"/>
</dbReference>
<dbReference type="GeneTree" id="ENSGT00940000153241"/>
<dbReference type="HOGENOM" id="CLU_027686_0_0_1"/>
<dbReference type="InParanoid" id="O35423"/>
<dbReference type="OMA" id="YEWDTPA"/>
<dbReference type="OrthoDB" id="7403325at2759"/>
<dbReference type="PhylomeDB" id="O35423"/>
<dbReference type="TreeFam" id="TF313234"/>
<dbReference type="Reactome" id="R-MMU-389661">
    <property type="pathway name" value="Glyoxylate metabolism and glycine degradation"/>
</dbReference>
<dbReference type="Reactome" id="R-MMU-9033241">
    <property type="pathway name" value="Peroxisomal protein import"/>
</dbReference>
<dbReference type="SABIO-RK" id="O35423"/>
<dbReference type="BioGRID-ORCS" id="11611">
    <property type="hits" value="4 hits in 77 CRISPR screens"/>
</dbReference>
<dbReference type="ChiTaRS" id="Agxt">
    <property type="organism name" value="mouse"/>
</dbReference>
<dbReference type="EvolutionaryTrace" id="O35423"/>
<dbReference type="PRO" id="PR:O35423"/>
<dbReference type="Proteomes" id="UP000000589">
    <property type="component" value="Chromosome 1"/>
</dbReference>
<dbReference type="RNAct" id="O35423">
    <property type="molecule type" value="protein"/>
</dbReference>
<dbReference type="Bgee" id="ENSMUSG00000026272">
    <property type="expression patterns" value="Expressed in left lobe of liver and 21 other cell types or tissues"/>
</dbReference>
<dbReference type="GO" id="GO:0005759">
    <property type="term" value="C:mitochondrial matrix"/>
    <property type="evidence" value="ECO:0007669"/>
    <property type="project" value="UniProtKB-SubCell"/>
</dbReference>
<dbReference type="GO" id="GO:0005739">
    <property type="term" value="C:mitochondrion"/>
    <property type="evidence" value="ECO:0000304"/>
    <property type="project" value="HGNC-UCL"/>
</dbReference>
<dbReference type="GO" id="GO:0005782">
    <property type="term" value="C:peroxisomal matrix"/>
    <property type="evidence" value="ECO:0007669"/>
    <property type="project" value="Ensembl"/>
</dbReference>
<dbReference type="GO" id="GO:0005777">
    <property type="term" value="C:peroxisome"/>
    <property type="evidence" value="ECO:0000250"/>
    <property type="project" value="UniProtKB"/>
</dbReference>
<dbReference type="GO" id="GO:0008453">
    <property type="term" value="F:alanine-glyoxylate transaminase activity"/>
    <property type="evidence" value="ECO:0000315"/>
    <property type="project" value="MGI"/>
</dbReference>
<dbReference type="GO" id="GO:0016597">
    <property type="term" value="F:amino acid binding"/>
    <property type="evidence" value="ECO:0007669"/>
    <property type="project" value="Ensembl"/>
</dbReference>
<dbReference type="GO" id="GO:0004760">
    <property type="term" value="F:L-serine-pyruvate transaminase activity"/>
    <property type="evidence" value="ECO:0007669"/>
    <property type="project" value="UniProtKB-EC"/>
</dbReference>
<dbReference type="GO" id="GO:0042803">
    <property type="term" value="F:protein homodimerization activity"/>
    <property type="evidence" value="ECO:0000250"/>
    <property type="project" value="UniProtKB"/>
</dbReference>
<dbReference type="GO" id="GO:0030170">
    <property type="term" value="F:pyridoxal phosphate binding"/>
    <property type="evidence" value="ECO:0007669"/>
    <property type="project" value="Ensembl"/>
</dbReference>
<dbReference type="GO" id="GO:0019265">
    <property type="term" value="P:glycine biosynthetic process, by transamination of glyoxylate"/>
    <property type="evidence" value="ECO:0007669"/>
    <property type="project" value="Ensembl"/>
</dbReference>
<dbReference type="GO" id="GO:0009436">
    <property type="term" value="P:glyoxylate catabolic process"/>
    <property type="evidence" value="ECO:0007669"/>
    <property type="project" value="Ensembl"/>
</dbReference>
<dbReference type="GO" id="GO:0046487">
    <property type="term" value="P:glyoxylate metabolic process"/>
    <property type="evidence" value="ECO:0000315"/>
    <property type="project" value="MGI"/>
</dbReference>
<dbReference type="GO" id="GO:0042853">
    <property type="term" value="P:L-alanine catabolic process"/>
    <property type="evidence" value="ECO:0007669"/>
    <property type="project" value="Ensembl"/>
</dbReference>
<dbReference type="GO" id="GO:0019448">
    <property type="term" value="P:L-cysteine catabolic process"/>
    <property type="evidence" value="ECO:0007669"/>
    <property type="project" value="Ensembl"/>
</dbReference>
<dbReference type="GO" id="GO:0006563">
    <property type="term" value="P:L-serine metabolic process"/>
    <property type="evidence" value="ECO:0007669"/>
    <property type="project" value="Ensembl"/>
</dbReference>
<dbReference type="GO" id="GO:0007219">
    <property type="term" value="P:Notch signaling pathway"/>
    <property type="evidence" value="ECO:0000314"/>
    <property type="project" value="MGI"/>
</dbReference>
<dbReference type="GO" id="GO:0046724">
    <property type="term" value="P:oxalic acid secretion"/>
    <property type="evidence" value="ECO:0000315"/>
    <property type="project" value="MGI"/>
</dbReference>
<dbReference type="GO" id="GO:0042866">
    <property type="term" value="P:pyruvate biosynthetic process"/>
    <property type="evidence" value="ECO:0007669"/>
    <property type="project" value="Ensembl"/>
</dbReference>
<dbReference type="GO" id="GO:0051591">
    <property type="term" value="P:response to cAMP"/>
    <property type="evidence" value="ECO:0007669"/>
    <property type="project" value="Ensembl"/>
</dbReference>
<dbReference type="GO" id="GO:0051384">
    <property type="term" value="P:response to glucocorticoid"/>
    <property type="evidence" value="ECO:0007669"/>
    <property type="project" value="Ensembl"/>
</dbReference>
<dbReference type="CDD" id="cd06451">
    <property type="entry name" value="AGAT_like"/>
    <property type="match status" value="1"/>
</dbReference>
<dbReference type="FunFam" id="3.90.1150.10:FF:000039">
    <property type="entry name" value="Serine--pyruvate aminotransferase"/>
    <property type="match status" value="1"/>
</dbReference>
<dbReference type="FunFam" id="3.40.640.10:FF:000027">
    <property type="entry name" value="Serine--pyruvate aminotransferase, mitochondrial"/>
    <property type="match status" value="1"/>
</dbReference>
<dbReference type="Gene3D" id="3.90.1150.10">
    <property type="entry name" value="Aspartate Aminotransferase, domain 1"/>
    <property type="match status" value="1"/>
</dbReference>
<dbReference type="Gene3D" id="3.40.640.10">
    <property type="entry name" value="Type I PLP-dependent aspartate aminotransferase-like (Major domain)"/>
    <property type="match status" value="1"/>
</dbReference>
<dbReference type="InterPro" id="IPR000192">
    <property type="entry name" value="Aminotrans_V_dom"/>
</dbReference>
<dbReference type="InterPro" id="IPR020578">
    <property type="entry name" value="Aminotrans_V_PyrdxlP_BS"/>
</dbReference>
<dbReference type="InterPro" id="IPR015424">
    <property type="entry name" value="PyrdxlP-dep_Trfase"/>
</dbReference>
<dbReference type="InterPro" id="IPR015421">
    <property type="entry name" value="PyrdxlP-dep_Trfase_major"/>
</dbReference>
<dbReference type="InterPro" id="IPR015422">
    <property type="entry name" value="PyrdxlP-dep_Trfase_small"/>
</dbReference>
<dbReference type="InterPro" id="IPR024169">
    <property type="entry name" value="SP_NH2Trfase/AEP_transaminase"/>
</dbReference>
<dbReference type="PANTHER" id="PTHR21152:SF40">
    <property type="entry name" value="ALANINE--GLYOXYLATE AMINOTRANSFERASE"/>
    <property type="match status" value="1"/>
</dbReference>
<dbReference type="PANTHER" id="PTHR21152">
    <property type="entry name" value="AMINOTRANSFERASE CLASS V"/>
    <property type="match status" value="1"/>
</dbReference>
<dbReference type="Pfam" id="PF00266">
    <property type="entry name" value="Aminotran_5"/>
    <property type="match status" value="1"/>
</dbReference>
<dbReference type="PIRSF" id="PIRSF000524">
    <property type="entry name" value="SPT"/>
    <property type="match status" value="1"/>
</dbReference>
<dbReference type="SUPFAM" id="SSF53383">
    <property type="entry name" value="PLP-dependent transferases"/>
    <property type="match status" value="1"/>
</dbReference>
<dbReference type="PROSITE" id="PS00595">
    <property type="entry name" value="AA_TRANSFER_CLASS_5"/>
    <property type="match status" value="1"/>
</dbReference>
<sequence>MFRMLAKASVTLGSRAAGWVRTMGSYQLLVPPPEALSKPLSVPTRLLLGPGPSNLAPRVLAAGSLRMIGHMQKEMLQIMEEIKQGIQYVFQTRNPLTLVVSGSGHCAMETALFNLLEPGDSFLTGTNGIWGMRAAEIADRIGARVHQMIKKPGEHYTLQEVEEGLAQHKPVLLFLVHGESSTGVVQPLDGFGELCHRYQCLLLVDSVASLGGVPIYMDQQGIDIMYSSSQKVLNAPPGISLISFNDKAKYKVYSRKTKPVSFYTDITYLAKLWGCEGETRVIHHTTPVTSLYCLRESLALIAEQGLENCWRRHREATAHLHKHLQEMGLKFFVKDPEIRLPTITTVTVPAGYNWRDIVSYVLDHFSIEISGGLGPTEERVLRIGLLGYNATTENVDRVAEALREALQHCPKNKL</sequence>
<protein>
    <recommendedName>
        <fullName evidence="5">Alanine--glyoxylate aminotransferase</fullName>
        <shortName>AGT</shortName>
        <ecNumber evidence="3">2.6.1.44</ecNumber>
    </recommendedName>
    <alternativeName>
        <fullName evidence="2">Serine--pyruvate aminotransferase, mitochondrial</fullName>
        <shortName>SPT</shortName>
        <ecNumber evidence="2">2.6.1.51</ecNumber>
    </alternativeName>
</protein>
<gene>
    <name evidence="6" type="primary">Agxt</name>
    <name type="synonym">Agxt1</name>
</gene>
<organism>
    <name type="scientific">Mus musculus</name>
    <name type="common">Mouse</name>
    <dbReference type="NCBI Taxonomy" id="10090"/>
    <lineage>
        <taxon>Eukaryota</taxon>
        <taxon>Metazoa</taxon>
        <taxon>Chordata</taxon>
        <taxon>Craniata</taxon>
        <taxon>Vertebrata</taxon>
        <taxon>Euteleostomi</taxon>
        <taxon>Mammalia</taxon>
        <taxon>Eutheria</taxon>
        <taxon>Euarchontoglires</taxon>
        <taxon>Glires</taxon>
        <taxon>Rodentia</taxon>
        <taxon>Myomorpha</taxon>
        <taxon>Muroidea</taxon>
        <taxon>Muridae</taxon>
        <taxon>Murinae</taxon>
        <taxon>Mus</taxon>
        <taxon>Mus</taxon>
    </lineage>
</organism>
<accession>O35423</accession>
<accession>Q8R128</accession>
<proteinExistence type="evidence at protein level"/>
<feature type="transit peptide" description="Mitochondrion">
    <location>
        <begin position="1"/>
        <end position="23"/>
    </location>
</feature>
<feature type="chain" id="PRO_0000001288" description="Alanine--glyoxylate aminotransferase">
    <location>
        <begin position="25"/>
        <end position="414"/>
    </location>
</feature>
<feature type="short sequence motif" description="Microbody targeting signal" evidence="1">
    <location>
        <begin position="412"/>
        <end position="414"/>
    </location>
</feature>
<feature type="binding site" evidence="1">
    <location>
        <position position="382"/>
    </location>
    <ligand>
        <name>substrate</name>
    </ligand>
</feature>
<feature type="modified residue" description="N6-(pyridoxal phosphate)lysine" evidence="1">
    <location>
        <position position="231"/>
    </location>
</feature>
<feature type="modified residue" description="N6-acetyllysine; alternate" evidence="7">
    <location>
        <position position="247"/>
    </location>
</feature>
<feature type="modified residue" description="N6-succinyllysine; alternate" evidence="8">
    <location>
        <position position="247"/>
    </location>
</feature>
<feature type="modified residue" description="N6-acetyllysine" evidence="7">
    <location>
        <position position="256"/>
    </location>
</feature>
<feature type="modified residue" description="N6-acetyllysine; alternate" evidence="7">
    <location>
        <position position="330"/>
    </location>
</feature>
<feature type="modified residue" description="N6-succinyllysine; alternate" evidence="8">
    <location>
        <position position="330"/>
    </location>
</feature>
<feature type="modified residue" description="N6-acetyllysine" evidence="7">
    <location>
        <position position="334"/>
    </location>
</feature>
<feature type="splice variant" id="VSP_018644" description="In isoform Peroxisomal." evidence="4">
    <location>
        <begin position="1"/>
        <end position="22"/>
    </location>
</feature>
<feature type="sequence conflict" description="In Ref. 1; AAB82001." evidence="5" ref="1">
    <original>Q</original>
    <variation>R</variation>
    <location>
        <position position="304"/>
    </location>
</feature>
<feature type="sequence conflict" description="In Ref. 1; AAB82001." evidence="5" ref="1">
    <original>VP</original>
    <variation>A</variation>
    <location>
        <begin position="348"/>
        <end position="349"/>
    </location>
</feature>
<feature type="helix" evidence="9">
    <location>
        <begin position="34"/>
        <end position="37"/>
    </location>
</feature>
<feature type="strand" evidence="9">
    <location>
        <begin position="49"/>
        <end position="51"/>
    </location>
</feature>
<feature type="helix" evidence="9">
    <location>
        <begin position="57"/>
        <end position="62"/>
    </location>
</feature>
<feature type="helix" evidence="9">
    <location>
        <begin position="73"/>
        <end position="90"/>
    </location>
</feature>
<feature type="strand" evidence="9">
    <location>
        <begin position="95"/>
        <end position="101"/>
    </location>
</feature>
<feature type="turn" evidence="9">
    <location>
        <begin position="104"/>
        <end position="106"/>
    </location>
</feature>
<feature type="helix" evidence="9">
    <location>
        <begin position="107"/>
        <end position="115"/>
    </location>
</feature>
<feature type="strand" evidence="9">
    <location>
        <begin position="121"/>
        <end position="128"/>
    </location>
</feature>
<feature type="helix" evidence="9">
    <location>
        <begin position="129"/>
        <end position="140"/>
    </location>
</feature>
<feature type="strand" evidence="9">
    <location>
        <begin position="144"/>
        <end position="149"/>
    </location>
</feature>
<feature type="helix" evidence="9">
    <location>
        <begin position="158"/>
        <end position="168"/>
    </location>
</feature>
<feature type="strand" evidence="9">
    <location>
        <begin position="171"/>
        <end position="179"/>
    </location>
</feature>
<feature type="turn" evidence="9">
    <location>
        <begin position="180"/>
        <end position="183"/>
    </location>
</feature>
<feature type="helix" evidence="9">
    <location>
        <begin position="191"/>
        <end position="197"/>
    </location>
</feature>
<feature type="strand" evidence="9">
    <location>
        <begin position="201"/>
        <end position="205"/>
    </location>
</feature>
<feature type="turn" evidence="9">
    <location>
        <begin position="207"/>
        <end position="212"/>
    </location>
</feature>
<feature type="turn" evidence="9">
    <location>
        <begin position="217"/>
        <end position="221"/>
    </location>
</feature>
<feature type="strand" evidence="9">
    <location>
        <begin position="224"/>
        <end position="231"/>
    </location>
</feature>
<feature type="strand" evidence="9">
    <location>
        <begin position="240"/>
        <end position="244"/>
    </location>
</feature>
<feature type="helix" evidence="9">
    <location>
        <begin position="246"/>
        <end position="253"/>
    </location>
</feature>
<feature type="helix" evidence="9">
    <location>
        <begin position="266"/>
        <end position="272"/>
    </location>
</feature>
<feature type="strand" evidence="9">
    <location>
        <begin position="276"/>
        <end position="278"/>
    </location>
</feature>
<feature type="helix" evidence="9">
    <location>
        <begin position="288"/>
        <end position="304"/>
    </location>
</feature>
<feature type="helix" evidence="9">
    <location>
        <begin position="306"/>
        <end position="326"/>
    </location>
</feature>
<feature type="strand" evidence="9">
    <location>
        <begin position="331"/>
        <end position="335"/>
    </location>
</feature>
<feature type="helix" evidence="9">
    <location>
        <begin position="336"/>
        <end position="338"/>
    </location>
</feature>
<feature type="strand" evidence="9">
    <location>
        <begin position="341"/>
        <end position="347"/>
    </location>
</feature>
<feature type="helix" evidence="9">
    <location>
        <begin position="354"/>
        <end position="365"/>
    </location>
</feature>
<feature type="helix" evidence="9">
    <location>
        <begin position="374"/>
        <end position="376"/>
    </location>
</feature>
<feature type="turn" evidence="9">
    <location>
        <begin position="377"/>
        <end position="379"/>
    </location>
</feature>
<feature type="strand" evidence="9">
    <location>
        <begin position="380"/>
        <end position="384"/>
    </location>
</feature>
<feature type="helix" evidence="9">
    <location>
        <begin position="387"/>
        <end position="389"/>
    </location>
</feature>
<feature type="helix" evidence="9">
    <location>
        <begin position="392"/>
        <end position="408"/>
    </location>
</feature>
<name>AGT1_MOUSE</name>
<keyword id="KW-0002">3D-structure</keyword>
<keyword id="KW-0007">Acetylation</keyword>
<keyword id="KW-0024">Alternative initiation</keyword>
<keyword id="KW-0032">Aminotransferase</keyword>
<keyword id="KW-0496">Mitochondrion</keyword>
<keyword id="KW-0576">Peroxisome</keyword>
<keyword id="KW-0663">Pyridoxal phosphate</keyword>
<keyword id="KW-1185">Reference proteome</keyword>
<keyword id="KW-0808">Transferase</keyword>
<keyword id="KW-0809">Transit peptide</keyword>